<evidence type="ECO:0000255" key="1">
    <source>
        <dbReference type="HAMAP-Rule" id="MF_00023"/>
    </source>
</evidence>
<dbReference type="EMBL" id="FM211187">
    <property type="protein sequence ID" value="CAR68726.1"/>
    <property type="molecule type" value="Genomic_DNA"/>
</dbReference>
<dbReference type="RefSeq" id="WP_001051750.1">
    <property type="nucleotide sequence ID" value="NC_011900.1"/>
</dbReference>
<dbReference type="SMR" id="B8ZPD4"/>
<dbReference type="GeneID" id="93739761"/>
<dbReference type="KEGG" id="sne:SPN23F09000"/>
<dbReference type="HOGENOM" id="CLU_108953_0_0_9"/>
<dbReference type="GO" id="GO:0005829">
    <property type="term" value="C:cytosol"/>
    <property type="evidence" value="ECO:0007669"/>
    <property type="project" value="TreeGrafter"/>
</dbReference>
<dbReference type="GO" id="GO:0003723">
    <property type="term" value="F:RNA binding"/>
    <property type="evidence" value="ECO:0007669"/>
    <property type="project" value="UniProtKB-UniRule"/>
</dbReference>
<dbReference type="GO" id="GO:0070929">
    <property type="term" value="P:trans-translation"/>
    <property type="evidence" value="ECO:0007669"/>
    <property type="project" value="UniProtKB-UniRule"/>
</dbReference>
<dbReference type="CDD" id="cd09294">
    <property type="entry name" value="SmpB"/>
    <property type="match status" value="1"/>
</dbReference>
<dbReference type="Gene3D" id="2.40.280.10">
    <property type="match status" value="1"/>
</dbReference>
<dbReference type="HAMAP" id="MF_00023">
    <property type="entry name" value="SmpB"/>
    <property type="match status" value="1"/>
</dbReference>
<dbReference type="InterPro" id="IPR023620">
    <property type="entry name" value="SmpB"/>
</dbReference>
<dbReference type="InterPro" id="IPR000037">
    <property type="entry name" value="SsrA-bd_prot"/>
</dbReference>
<dbReference type="InterPro" id="IPR020081">
    <property type="entry name" value="SsrA-bd_prot_CS"/>
</dbReference>
<dbReference type="NCBIfam" id="NF003843">
    <property type="entry name" value="PRK05422.1"/>
    <property type="match status" value="1"/>
</dbReference>
<dbReference type="NCBIfam" id="TIGR00086">
    <property type="entry name" value="smpB"/>
    <property type="match status" value="1"/>
</dbReference>
<dbReference type="PANTHER" id="PTHR30308:SF2">
    <property type="entry name" value="SSRA-BINDING PROTEIN"/>
    <property type="match status" value="1"/>
</dbReference>
<dbReference type="PANTHER" id="PTHR30308">
    <property type="entry name" value="TMRNA-BINDING COMPONENT OF TRANS-TRANSLATION TAGGING COMPLEX"/>
    <property type="match status" value="1"/>
</dbReference>
<dbReference type="Pfam" id="PF01668">
    <property type="entry name" value="SmpB"/>
    <property type="match status" value="1"/>
</dbReference>
<dbReference type="SUPFAM" id="SSF74982">
    <property type="entry name" value="Small protein B (SmpB)"/>
    <property type="match status" value="1"/>
</dbReference>
<dbReference type="PROSITE" id="PS01317">
    <property type="entry name" value="SSRP"/>
    <property type="match status" value="1"/>
</dbReference>
<sequence length="155" mass="17748">MAKGEGKVVAQNKKARHDYTIVDTLEAGMVLTGTEIKSVRAARINLKDGFAQVKNGEVWLSNVHIAPYEEGNIWNQEPERRRKLLLHKKQIQKLEQETKGTGMTLVPLKVYIKDGYAKLLLGLAKGKHDYDKRESIKRREQNRDIARVMKAVNQR</sequence>
<reference key="1">
    <citation type="journal article" date="2009" name="J. Bacteriol.">
        <title>Role of conjugative elements in the evolution of the multidrug-resistant pandemic clone Streptococcus pneumoniae Spain23F ST81.</title>
        <authorList>
            <person name="Croucher N.J."/>
            <person name="Walker D."/>
            <person name="Romero P."/>
            <person name="Lennard N."/>
            <person name="Paterson G.K."/>
            <person name="Bason N.C."/>
            <person name="Mitchell A.M."/>
            <person name="Quail M.A."/>
            <person name="Andrew P.W."/>
            <person name="Parkhill J."/>
            <person name="Bentley S.D."/>
            <person name="Mitchell T.J."/>
        </authorList>
    </citation>
    <scope>NUCLEOTIDE SEQUENCE [LARGE SCALE GENOMIC DNA]</scope>
    <source>
        <strain>ATCC 700669 / Spain 23F-1</strain>
    </source>
</reference>
<proteinExistence type="inferred from homology"/>
<organism>
    <name type="scientific">Streptococcus pneumoniae (strain ATCC 700669 / Spain 23F-1)</name>
    <dbReference type="NCBI Taxonomy" id="561276"/>
    <lineage>
        <taxon>Bacteria</taxon>
        <taxon>Bacillati</taxon>
        <taxon>Bacillota</taxon>
        <taxon>Bacilli</taxon>
        <taxon>Lactobacillales</taxon>
        <taxon>Streptococcaceae</taxon>
        <taxon>Streptococcus</taxon>
    </lineage>
</organism>
<name>SSRP_STRPJ</name>
<comment type="function">
    <text evidence="1">Required for rescue of stalled ribosomes mediated by trans-translation. Binds to transfer-messenger RNA (tmRNA), required for stable association of tmRNA with ribosomes. tmRNA and SmpB together mimic tRNA shape, replacing the anticodon stem-loop with SmpB. tmRNA is encoded by the ssrA gene; the 2 termini fold to resemble tRNA(Ala) and it encodes a 'tag peptide', a short internal open reading frame. During trans-translation Ala-aminoacylated tmRNA acts like a tRNA, entering the A-site of stalled ribosomes, displacing the stalled mRNA. The ribosome then switches to translate the ORF on the tmRNA; the nascent peptide is terminated with the 'tag peptide' encoded by the tmRNA and targeted for degradation. The ribosome is freed to recommence translation, which seems to be the essential function of trans-translation.</text>
</comment>
<comment type="subcellular location">
    <subcellularLocation>
        <location evidence="1">Cytoplasm</location>
    </subcellularLocation>
    <text evidence="1">The tmRNA-SmpB complex associates with stalled 70S ribosomes.</text>
</comment>
<comment type="similarity">
    <text evidence="1">Belongs to the SmpB family.</text>
</comment>
<gene>
    <name evidence="1" type="primary">smpB</name>
    <name type="ordered locus">SPN23F09000</name>
</gene>
<feature type="chain" id="PRO_1000197627" description="SsrA-binding protein">
    <location>
        <begin position="1"/>
        <end position="155"/>
    </location>
</feature>
<protein>
    <recommendedName>
        <fullName evidence="1">SsrA-binding protein</fullName>
    </recommendedName>
    <alternativeName>
        <fullName evidence="1">Small protein B</fullName>
    </alternativeName>
</protein>
<accession>B8ZPD4</accession>
<keyword id="KW-0963">Cytoplasm</keyword>
<keyword id="KW-0694">RNA-binding</keyword>